<proteinExistence type="inferred from homology"/>
<reference key="1">
    <citation type="journal article" date="2009" name="Genome Biol.">
        <title>Genomic and genetic analyses of diversity and plant interactions of Pseudomonas fluorescens.</title>
        <authorList>
            <person name="Silby M.W."/>
            <person name="Cerdeno-Tarraga A.M."/>
            <person name="Vernikos G.S."/>
            <person name="Giddens S.R."/>
            <person name="Jackson R.W."/>
            <person name="Preston G.M."/>
            <person name="Zhang X.-X."/>
            <person name="Moon C.D."/>
            <person name="Gehrig S.M."/>
            <person name="Godfrey S.A.C."/>
            <person name="Knight C.G."/>
            <person name="Malone J.G."/>
            <person name="Robinson Z."/>
            <person name="Spiers A.J."/>
            <person name="Harris S."/>
            <person name="Challis G.L."/>
            <person name="Yaxley A.M."/>
            <person name="Harris D."/>
            <person name="Seeger K."/>
            <person name="Murphy L."/>
            <person name="Rutter S."/>
            <person name="Squares R."/>
            <person name="Quail M.A."/>
            <person name="Saunders E."/>
            <person name="Mavromatis K."/>
            <person name="Brettin T.S."/>
            <person name="Bentley S.D."/>
            <person name="Hothersall J."/>
            <person name="Stephens E."/>
            <person name="Thomas C.M."/>
            <person name="Parkhill J."/>
            <person name="Levy S.B."/>
            <person name="Rainey P.B."/>
            <person name="Thomson N.R."/>
        </authorList>
    </citation>
    <scope>NUCLEOTIDE SEQUENCE [LARGE SCALE GENOMIC DNA]</scope>
    <source>
        <strain>Pf0-1</strain>
    </source>
</reference>
<feature type="chain" id="PRO_0000237389" description="Glutamate--tRNA ligase">
    <location>
        <begin position="1"/>
        <end position="493"/>
    </location>
</feature>
<feature type="short sequence motif" description="'HIGH' region" evidence="1">
    <location>
        <begin position="10"/>
        <end position="20"/>
    </location>
</feature>
<feature type="short sequence motif" description="'KMSKS' region" evidence="1">
    <location>
        <begin position="251"/>
        <end position="255"/>
    </location>
</feature>
<feature type="binding site" evidence="1">
    <location>
        <position position="254"/>
    </location>
    <ligand>
        <name>ATP</name>
        <dbReference type="ChEBI" id="CHEBI:30616"/>
    </ligand>
</feature>
<accession>Q3KF35</accession>
<protein>
    <recommendedName>
        <fullName evidence="1">Glutamate--tRNA ligase</fullName>
        <ecNumber evidence="1">6.1.1.17</ecNumber>
    </recommendedName>
    <alternativeName>
        <fullName evidence="1">Glutamyl-tRNA synthetase</fullName>
        <shortName evidence="1">GluRS</shortName>
    </alternativeName>
</protein>
<evidence type="ECO:0000255" key="1">
    <source>
        <dbReference type="HAMAP-Rule" id="MF_00022"/>
    </source>
</evidence>
<evidence type="ECO:0000305" key="2"/>
<organism>
    <name type="scientific">Pseudomonas fluorescens (strain Pf0-1)</name>
    <dbReference type="NCBI Taxonomy" id="205922"/>
    <lineage>
        <taxon>Bacteria</taxon>
        <taxon>Pseudomonadati</taxon>
        <taxon>Pseudomonadota</taxon>
        <taxon>Gammaproteobacteria</taxon>
        <taxon>Pseudomonadales</taxon>
        <taxon>Pseudomonadaceae</taxon>
        <taxon>Pseudomonas</taxon>
    </lineage>
</organism>
<gene>
    <name evidence="1" type="primary">gltX</name>
    <name type="ordered locus">Pfl01_1878</name>
</gene>
<keyword id="KW-0030">Aminoacyl-tRNA synthetase</keyword>
<keyword id="KW-0067">ATP-binding</keyword>
<keyword id="KW-0963">Cytoplasm</keyword>
<keyword id="KW-0436">Ligase</keyword>
<keyword id="KW-0547">Nucleotide-binding</keyword>
<keyword id="KW-0648">Protein biosynthesis</keyword>
<sequence length="493" mass="56244">MTTVRTRIAPSPTGDPHVGTAYIALFNYCFAKQHGGEFILRIEDTDQLRSTRESEQQIFDALRWLGIDWSEGPDVGGPHGPYRQSERGDIYQKYCQQLVDMGHAFPCFCTAEELDQMRAEQMARGETPRYDGRALLLSKEEVARRLAAGEPHVIRMKVPSEGVCVVPDMLRGDVEIPWDRMDMQVLMKTDGLPTYFLANVVDDHLMGITHVLRGEEWLPSAPKLILLYEYFGWEQPELCYMPLLRNPDKSKLSKRKNPTSVTFYERMGFMPEAMLNYLGRMGWSMPDEREKFSLQEMVDNFDLKRVSLGGPIFDIEKLSWLNGQWLRDLPVEEFAARVQKWAFNSEYMMKIAPHVQGRVETFSQVAPLAGFFFAGGVNPDAKLFESKKLSGDQVRQLMQLILWKLESLRQWEKDSITATIQAVVESLELKLRDAMPLMFAAITGQASSVSVLDAMEILGPDLTRFRLRQAIDLLGGVSKKENKEWEKLLGAIA</sequence>
<name>SYE_PSEPF</name>
<dbReference type="EC" id="6.1.1.17" evidence="1"/>
<dbReference type="EMBL" id="CP000094">
    <property type="protein sequence ID" value="ABA73621.1"/>
    <property type="status" value="ALT_INIT"/>
    <property type="molecule type" value="Genomic_DNA"/>
</dbReference>
<dbReference type="RefSeq" id="WP_007956429.1">
    <property type="nucleotide sequence ID" value="NC_007492.2"/>
</dbReference>
<dbReference type="SMR" id="Q3KF35"/>
<dbReference type="KEGG" id="pfo:Pfl01_1878"/>
<dbReference type="eggNOG" id="COG0008">
    <property type="taxonomic scope" value="Bacteria"/>
</dbReference>
<dbReference type="HOGENOM" id="CLU_015768_6_3_6"/>
<dbReference type="Proteomes" id="UP000002704">
    <property type="component" value="Chromosome"/>
</dbReference>
<dbReference type="GO" id="GO:0005829">
    <property type="term" value="C:cytosol"/>
    <property type="evidence" value="ECO:0007669"/>
    <property type="project" value="TreeGrafter"/>
</dbReference>
<dbReference type="GO" id="GO:0005524">
    <property type="term" value="F:ATP binding"/>
    <property type="evidence" value="ECO:0007669"/>
    <property type="project" value="UniProtKB-UniRule"/>
</dbReference>
<dbReference type="GO" id="GO:0004818">
    <property type="term" value="F:glutamate-tRNA ligase activity"/>
    <property type="evidence" value="ECO:0007669"/>
    <property type="project" value="UniProtKB-UniRule"/>
</dbReference>
<dbReference type="GO" id="GO:0000049">
    <property type="term" value="F:tRNA binding"/>
    <property type="evidence" value="ECO:0007669"/>
    <property type="project" value="InterPro"/>
</dbReference>
<dbReference type="GO" id="GO:0008270">
    <property type="term" value="F:zinc ion binding"/>
    <property type="evidence" value="ECO:0007669"/>
    <property type="project" value="InterPro"/>
</dbReference>
<dbReference type="GO" id="GO:0006424">
    <property type="term" value="P:glutamyl-tRNA aminoacylation"/>
    <property type="evidence" value="ECO:0007669"/>
    <property type="project" value="UniProtKB-UniRule"/>
</dbReference>
<dbReference type="CDD" id="cd00808">
    <property type="entry name" value="GluRS_core"/>
    <property type="match status" value="1"/>
</dbReference>
<dbReference type="FunFam" id="1.10.10.350:FF:000007">
    <property type="entry name" value="Glutamate--tRNA ligase"/>
    <property type="match status" value="1"/>
</dbReference>
<dbReference type="FunFam" id="3.40.50.620:FF:000045">
    <property type="entry name" value="Glutamate--tRNA ligase, mitochondrial"/>
    <property type="match status" value="1"/>
</dbReference>
<dbReference type="Gene3D" id="1.10.10.350">
    <property type="match status" value="1"/>
</dbReference>
<dbReference type="Gene3D" id="3.40.50.620">
    <property type="entry name" value="HUPs"/>
    <property type="match status" value="1"/>
</dbReference>
<dbReference type="HAMAP" id="MF_00022">
    <property type="entry name" value="Glu_tRNA_synth_type1"/>
    <property type="match status" value="1"/>
</dbReference>
<dbReference type="InterPro" id="IPR045462">
    <property type="entry name" value="aa-tRNA-synth_I_cd-bd"/>
</dbReference>
<dbReference type="InterPro" id="IPR020751">
    <property type="entry name" value="aa-tRNA-synth_I_codon-bd_sub2"/>
</dbReference>
<dbReference type="InterPro" id="IPR001412">
    <property type="entry name" value="aa-tRNA-synth_I_CS"/>
</dbReference>
<dbReference type="InterPro" id="IPR008925">
    <property type="entry name" value="aa_tRNA-synth_I_cd-bd_sf"/>
</dbReference>
<dbReference type="InterPro" id="IPR004527">
    <property type="entry name" value="Glu-tRNA-ligase_bac/mito"/>
</dbReference>
<dbReference type="InterPro" id="IPR000924">
    <property type="entry name" value="Glu/Gln-tRNA-synth"/>
</dbReference>
<dbReference type="InterPro" id="IPR020058">
    <property type="entry name" value="Glu/Gln-tRNA-synth_Ib_cat-dom"/>
</dbReference>
<dbReference type="InterPro" id="IPR049940">
    <property type="entry name" value="GluQ/Sye"/>
</dbReference>
<dbReference type="InterPro" id="IPR033910">
    <property type="entry name" value="GluRS_core"/>
</dbReference>
<dbReference type="InterPro" id="IPR014729">
    <property type="entry name" value="Rossmann-like_a/b/a_fold"/>
</dbReference>
<dbReference type="NCBIfam" id="TIGR00464">
    <property type="entry name" value="gltX_bact"/>
    <property type="match status" value="1"/>
</dbReference>
<dbReference type="PANTHER" id="PTHR43311">
    <property type="entry name" value="GLUTAMATE--TRNA LIGASE"/>
    <property type="match status" value="1"/>
</dbReference>
<dbReference type="PANTHER" id="PTHR43311:SF2">
    <property type="entry name" value="GLUTAMATE--TRNA LIGASE, MITOCHONDRIAL-RELATED"/>
    <property type="match status" value="1"/>
</dbReference>
<dbReference type="Pfam" id="PF19269">
    <property type="entry name" value="Anticodon_2"/>
    <property type="match status" value="1"/>
</dbReference>
<dbReference type="Pfam" id="PF00749">
    <property type="entry name" value="tRNA-synt_1c"/>
    <property type="match status" value="1"/>
</dbReference>
<dbReference type="PRINTS" id="PR00987">
    <property type="entry name" value="TRNASYNTHGLU"/>
</dbReference>
<dbReference type="SUPFAM" id="SSF48163">
    <property type="entry name" value="An anticodon-binding domain of class I aminoacyl-tRNA synthetases"/>
    <property type="match status" value="1"/>
</dbReference>
<dbReference type="SUPFAM" id="SSF52374">
    <property type="entry name" value="Nucleotidylyl transferase"/>
    <property type="match status" value="1"/>
</dbReference>
<dbReference type="PROSITE" id="PS00178">
    <property type="entry name" value="AA_TRNA_LIGASE_I"/>
    <property type="match status" value="1"/>
</dbReference>
<comment type="function">
    <text evidence="1">Catalyzes the attachment of glutamate to tRNA(Glu) in a two-step reaction: glutamate is first activated by ATP to form Glu-AMP and then transferred to the acceptor end of tRNA(Glu).</text>
</comment>
<comment type="catalytic activity">
    <reaction evidence="1">
        <text>tRNA(Glu) + L-glutamate + ATP = L-glutamyl-tRNA(Glu) + AMP + diphosphate</text>
        <dbReference type="Rhea" id="RHEA:23540"/>
        <dbReference type="Rhea" id="RHEA-COMP:9663"/>
        <dbReference type="Rhea" id="RHEA-COMP:9680"/>
        <dbReference type="ChEBI" id="CHEBI:29985"/>
        <dbReference type="ChEBI" id="CHEBI:30616"/>
        <dbReference type="ChEBI" id="CHEBI:33019"/>
        <dbReference type="ChEBI" id="CHEBI:78442"/>
        <dbReference type="ChEBI" id="CHEBI:78520"/>
        <dbReference type="ChEBI" id="CHEBI:456215"/>
        <dbReference type="EC" id="6.1.1.17"/>
    </reaction>
</comment>
<comment type="subunit">
    <text evidence="1">Monomer.</text>
</comment>
<comment type="subcellular location">
    <subcellularLocation>
        <location evidence="1">Cytoplasm</location>
    </subcellularLocation>
</comment>
<comment type="similarity">
    <text evidence="1">Belongs to the class-I aminoacyl-tRNA synthetase family. Glutamate--tRNA ligase type 1 subfamily.</text>
</comment>
<comment type="sequence caution" evidence="2">
    <conflict type="erroneous initiation">
        <sequence resource="EMBL-CDS" id="ABA73621"/>
    </conflict>
</comment>